<protein>
    <recommendedName>
        <fullName evidence="1">Enoyl-[acyl-carrier-protein] reductase [NADH]</fullName>
        <shortName evidence="1">ENR</shortName>
        <ecNumber evidence="1">1.3.1.9</ecNumber>
    </recommendedName>
</protein>
<dbReference type="EC" id="1.3.1.9" evidence="1"/>
<dbReference type="EMBL" id="CP000438">
    <property type="protein sequence ID" value="ABJ12188.1"/>
    <property type="molecule type" value="Genomic_DNA"/>
</dbReference>
<dbReference type="RefSeq" id="WP_003102929.1">
    <property type="nucleotide sequence ID" value="NZ_CP034244.1"/>
</dbReference>
<dbReference type="SMR" id="Q02PB3"/>
<dbReference type="KEGG" id="pau:PA14_25900"/>
<dbReference type="PseudoCAP" id="PA14_25900"/>
<dbReference type="HOGENOM" id="CLU_057698_1_0_6"/>
<dbReference type="BioCyc" id="PAER208963:G1G74-2159-MONOMER"/>
<dbReference type="UniPathway" id="UPA00094"/>
<dbReference type="Proteomes" id="UP000000653">
    <property type="component" value="Chromosome"/>
</dbReference>
<dbReference type="GO" id="GO:0004318">
    <property type="term" value="F:enoyl-[acyl-carrier-protein] reductase (NADH) activity"/>
    <property type="evidence" value="ECO:0007669"/>
    <property type="project" value="UniProtKB-UniRule"/>
</dbReference>
<dbReference type="GO" id="GO:0051287">
    <property type="term" value="F:NAD binding"/>
    <property type="evidence" value="ECO:0007669"/>
    <property type="project" value="UniProtKB-UniRule"/>
</dbReference>
<dbReference type="GO" id="GO:0050343">
    <property type="term" value="F:trans-2-enoyl-CoA reductase (NADH) activity"/>
    <property type="evidence" value="ECO:0007669"/>
    <property type="project" value="TreeGrafter"/>
</dbReference>
<dbReference type="GO" id="GO:0006633">
    <property type="term" value="P:fatty acid biosynthetic process"/>
    <property type="evidence" value="ECO:0007669"/>
    <property type="project" value="UniProtKB-UniRule"/>
</dbReference>
<dbReference type="FunFam" id="3.40.50.720:FF:000221">
    <property type="entry name" value="Enoyl-[acyl-carrier-protein] reductase [NADH]"/>
    <property type="match status" value="1"/>
</dbReference>
<dbReference type="Gene3D" id="3.40.50.720">
    <property type="entry name" value="NAD(P)-binding Rossmann-like Domain"/>
    <property type="match status" value="1"/>
</dbReference>
<dbReference type="HAMAP" id="MF_01838">
    <property type="entry name" value="FabV_reductase"/>
    <property type="match status" value="1"/>
</dbReference>
<dbReference type="InterPro" id="IPR024906">
    <property type="entry name" value="Eno_Rdtase_FAD-bd_dom"/>
</dbReference>
<dbReference type="InterPro" id="IPR024910">
    <property type="entry name" value="Enoyl-CoA_Rdtase_cat_dom"/>
</dbReference>
<dbReference type="InterPro" id="IPR050048">
    <property type="entry name" value="FabV-like_NADH_b"/>
</dbReference>
<dbReference type="InterPro" id="IPR010758">
    <property type="entry name" value="Trans-2-enoyl-CoA_reductase"/>
</dbReference>
<dbReference type="NCBIfam" id="NF043048">
    <property type="entry name" value="EnoyACPredFabV"/>
    <property type="match status" value="1"/>
</dbReference>
<dbReference type="NCBIfam" id="NF010177">
    <property type="entry name" value="PRK13656.1"/>
    <property type="match status" value="1"/>
</dbReference>
<dbReference type="PANTHER" id="PTHR37480">
    <property type="entry name" value="ENOYL-[ACYL-CARRIER-PROTEIN] REDUCTASE [NADH]"/>
    <property type="match status" value="1"/>
</dbReference>
<dbReference type="PANTHER" id="PTHR37480:SF1">
    <property type="entry name" value="ENOYL-[ACYL-CARRIER-PROTEIN] REDUCTASE [NADH]"/>
    <property type="match status" value="1"/>
</dbReference>
<dbReference type="Pfam" id="PF07055">
    <property type="entry name" value="Eno-Rase_FAD_bd"/>
    <property type="match status" value="1"/>
</dbReference>
<dbReference type="Pfam" id="PF12242">
    <property type="entry name" value="Eno-Rase_NADH_b"/>
    <property type="match status" value="1"/>
</dbReference>
<dbReference type="Pfam" id="PF12241">
    <property type="entry name" value="Enoyl_reductase"/>
    <property type="match status" value="1"/>
</dbReference>
<reference key="1">
    <citation type="journal article" date="2006" name="Genome Biol.">
        <title>Genomic analysis reveals that Pseudomonas aeruginosa virulence is combinatorial.</title>
        <authorList>
            <person name="Lee D.G."/>
            <person name="Urbach J.M."/>
            <person name="Wu G."/>
            <person name="Liberati N.T."/>
            <person name="Feinbaum R.L."/>
            <person name="Miyata S."/>
            <person name="Diggins L.T."/>
            <person name="He J."/>
            <person name="Saucier M."/>
            <person name="Deziel E."/>
            <person name="Friedman L."/>
            <person name="Li L."/>
            <person name="Grills G."/>
            <person name="Montgomery K."/>
            <person name="Kucherlapati R."/>
            <person name="Rahme L.G."/>
            <person name="Ausubel F.M."/>
        </authorList>
    </citation>
    <scope>NUCLEOTIDE SEQUENCE [LARGE SCALE GENOMIC DNA]</scope>
    <source>
        <strain>UCBPP-PA14</strain>
    </source>
</reference>
<feature type="chain" id="PRO_1000070488" description="Enoyl-[acyl-carrier-protein] reductase [NADH]">
    <location>
        <begin position="1"/>
        <end position="398"/>
    </location>
</feature>
<feature type="active site" description="Proton donor" evidence="1">
    <location>
        <position position="235"/>
    </location>
</feature>
<feature type="binding site" evidence="1">
    <location>
        <begin position="48"/>
        <end position="53"/>
    </location>
    <ligand>
        <name>NAD(+)</name>
        <dbReference type="ChEBI" id="CHEBI:57540"/>
    </ligand>
</feature>
<feature type="binding site" evidence="1">
    <location>
        <begin position="74"/>
        <end position="75"/>
    </location>
    <ligand>
        <name>NAD(+)</name>
        <dbReference type="ChEBI" id="CHEBI:57540"/>
    </ligand>
</feature>
<feature type="binding site" evidence="1">
    <location>
        <begin position="111"/>
        <end position="112"/>
    </location>
    <ligand>
        <name>NAD(+)</name>
        <dbReference type="ChEBI" id="CHEBI:57540"/>
    </ligand>
</feature>
<feature type="binding site" evidence="1">
    <location>
        <begin position="139"/>
        <end position="140"/>
    </location>
    <ligand>
        <name>NAD(+)</name>
        <dbReference type="ChEBI" id="CHEBI:57540"/>
    </ligand>
</feature>
<feature type="binding site" evidence="1">
    <location>
        <position position="225"/>
    </location>
    <ligand>
        <name>substrate</name>
    </ligand>
</feature>
<feature type="binding site" evidence="1">
    <location>
        <position position="244"/>
    </location>
    <ligand>
        <name>NAD(+)</name>
        <dbReference type="ChEBI" id="CHEBI:57540"/>
    </ligand>
</feature>
<feature type="binding site" evidence="1">
    <location>
        <begin position="273"/>
        <end position="275"/>
    </location>
    <ligand>
        <name>NAD(+)</name>
        <dbReference type="ChEBI" id="CHEBI:57540"/>
    </ligand>
</feature>
<feature type="site" description="Plays an important role in discriminating NADH against NADPH" evidence="1">
    <location>
        <position position="75"/>
    </location>
</feature>
<accession>Q02PB3</accession>
<proteinExistence type="inferred from homology"/>
<name>FABV_PSEAB</name>
<gene>
    <name evidence="1" type="primary">fabV</name>
    <name type="ordered locus">PA14_25900</name>
</gene>
<comment type="function">
    <text evidence="1">Involved in the final reduction of the elongation cycle of fatty acid synthesis (FAS II). Catalyzes the reduction of a carbon-carbon double bond in an enoyl moiety that is covalently linked to an acyl carrier protein (ACP).</text>
</comment>
<comment type="catalytic activity">
    <reaction evidence="1">
        <text>a 2,3-saturated acyl-[ACP] + NAD(+) = a (2E)-enoyl-[ACP] + NADH + H(+)</text>
        <dbReference type="Rhea" id="RHEA:10240"/>
        <dbReference type="Rhea" id="RHEA-COMP:9925"/>
        <dbReference type="Rhea" id="RHEA-COMP:9926"/>
        <dbReference type="ChEBI" id="CHEBI:15378"/>
        <dbReference type="ChEBI" id="CHEBI:57540"/>
        <dbReference type="ChEBI" id="CHEBI:57945"/>
        <dbReference type="ChEBI" id="CHEBI:78784"/>
        <dbReference type="ChEBI" id="CHEBI:78785"/>
        <dbReference type="EC" id="1.3.1.9"/>
    </reaction>
</comment>
<comment type="pathway">
    <text evidence="1">Lipid metabolism; fatty acid biosynthesis.</text>
</comment>
<comment type="subunit">
    <text evidence="1">Monomer.</text>
</comment>
<comment type="similarity">
    <text evidence="1">Belongs to the TER reductase family.</text>
</comment>
<evidence type="ECO:0000255" key="1">
    <source>
        <dbReference type="HAMAP-Rule" id="MF_01838"/>
    </source>
</evidence>
<keyword id="KW-0275">Fatty acid biosynthesis</keyword>
<keyword id="KW-0276">Fatty acid metabolism</keyword>
<keyword id="KW-0444">Lipid biosynthesis</keyword>
<keyword id="KW-0443">Lipid metabolism</keyword>
<keyword id="KW-0520">NAD</keyword>
<keyword id="KW-0560">Oxidoreductase</keyword>
<organism>
    <name type="scientific">Pseudomonas aeruginosa (strain UCBPP-PA14)</name>
    <dbReference type="NCBI Taxonomy" id="208963"/>
    <lineage>
        <taxon>Bacteria</taxon>
        <taxon>Pseudomonadati</taxon>
        <taxon>Pseudomonadota</taxon>
        <taxon>Gammaproteobacteria</taxon>
        <taxon>Pseudomonadales</taxon>
        <taxon>Pseudomonadaceae</taxon>
        <taxon>Pseudomonas</taxon>
    </lineage>
</organism>
<sequence>MIIKPRVRGFICVTTHPAGCEANVKQQIDYVEAKGPVVNGPKKVLVIGSSTGYGLAARITAAFGSGADTLGVFFERPGSESKPGTAGWYNSAAFEKFAHEKGLYARSINGDAFSDEVKRLTIETIKRDLGKVDLVVYSLAAPRRTHPKSGEVFSSTLKPIGKSVSFRGLDTDKEVIKDVVLEAASDQEVADTVAVMGGEDWQMWIDALLEADVLADGAKTTAFTYLGEKITHDIYWNGSIGAAKKDLDQKVLGIRDKLAPLGGDARVSVLKAVVTQASSAIPMMPLYLSLLFKVMKEQGTHEGCIEQVDGLYRESLYGAEPRLDEEGRLRADYKELQPEVQSRVEELWDKVTNENLYELTDFAGYKSEFLNLFGFEVAGVDYEQDVNPDVQIANLIQA</sequence>